<gene>
    <name type="primary">dnrS</name>
    <name type="synonym">dnmS</name>
</gene>
<dbReference type="EC" id="2.4.1.-"/>
<dbReference type="EMBL" id="L47164">
    <property type="protein sequence ID" value="AAD15267.1"/>
    <property type="molecule type" value="Genomic_DNA"/>
</dbReference>
<dbReference type="SMR" id="Q54824"/>
<dbReference type="CAZy" id="GT1">
    <property type="family name" value="Glycosyltransferase Family 1"/>
</dbReference>
<dbReference type="KEGG" id="ag:AAD15267"/>
<dbReference type="BioCyc" id="MetaCyc:MONOMER-18176"/>
<dbReference type="UniPathway" id="UPA00054"/>
<dbReference type="UniPathway" id="UPA01040"/>
<dbReference type="GO" id="GO:0016758">
    <property type="term" value="F:hexosyltransferase activity"/>
    <property type="evidence" value="ECO:0000315"/>
    <property type="project" value="UniProtKB"/>
</dbReference>
<dbReference type="GO" id="GO:0008194">
    <property type="term" value="F:UDP-glycosyltransferase activity"/>
    <property type="evidence" value="ECO:0007669"/>
    <property type="project" value="InterPro"/>
</dbReference>
<dbReference type="GO" id="GO:1901771">
    <property type="term" value="P:daunorubicin biosynthetic process"/>
    <property type="evidence" value="ECO:0000315"/>
    <property type="project" value="UniProtKB"/>
</dbReference>
<dbReference type="CDD" id="cd03784">
    <property type="entry name" value="GT1_Gtf-like"/>
    <property type="match status" value="1"/>
</dbReference>
<dbReference type="FunFam" id="3.40.50.2000:FF:000072">
    <property type="entry name" value="Glycosyl transferase"/>
    <property type="match status" value="1"/>
</dbReference>
<dbReference type="FunFam" id="3.40.50.2000:FF:000261">
    <property type="entry name" value="Putative glycosyl transferase"/>
    <property type="match status" value="1"/>
</dbReference>
<dbReference type="Gene3D" id="3.40.50.2000">
    <property type="entry name" value="Glycogen Phosphorylase B"/>
    <property type="match status" value="2"/>
</dbReference>
<dbReference type="InterPro" id="IPR010610">
    <property type="entry name" value="EryCIII-like_C"/>
</dbReference>
<dbReference type="InterPro" id="IPR048284">
    <property type="entry name" value="EryCIII-like_N"/>
</dbReference>
<dbReference type="InterPro" id="IPR030953">
    <property type="entry name" value="Glycosyl_450act"/>
</dbReference>
<dbReference type="InterPro" id="IPR050426">
    <property type="entry name" value="Glycosyltransferase_28"/>
</dbReference>
<dbReference type="InterPro" id="IPR002213">
    <property type="entry name" value="UDP_glucos_trans"/>
</dbReference>
<dbReference type="NCBIfam" id="TIGR04516">
    <property type="entry name" value="glycosyl_450act"/>
    <property type="match status" value="1"/>
</dbReference>
<dbReference type="PANTHER" id="PTHR48050">
    <property type="entry name" value="STEROL 3-BETA-GLUCOSYLTRANSFERASE"/>
    <property type="match status" value="1"/>
</dbReference>
<dbReference type="PANTHER" id="PTHR48050:SF13">
    <property type="entry name" value="STEROL 3-BETA-GLUCOSYLTRANSFERASE UGT80A2"/>
    <property type="match status" value="1"/>
</dbReference>
<dbReference type="Pfam" id="PF06722">
    <property type="entry name" value="EryCIII-like_C"/>
    <property type="match status" value="1"/>
</dbReference>
<dbReference type="Pfam" id="PF21036">
    <property type="entry name" value="EryCIII-like_N"/>
    <property type="match status" value="1"/>
</dbReference>
<dbReference type="SUPFAM" id="SSF53756">
    <property type="entry name" value="UDP-Glycosyltransferase/glycogen phosphorylase"/>
    <property type="match status" value="1"/>
</dbReference>
<organism>
    <name type="scientific">Streptomyces peucetius</name>
    <dbReference type="NCBI Taxonomy" id="1950"/>
    <lineage>
        <taxon>Bacteria</taxon>
        <taxon>Bacillati</taxon>
        <taxon>Actinomycetota</taxon>
        <taxon>Actinomycetes</taxon>
        <taxon>Kitasatosporales</taxon>
        <taxon>Streptomycetaceae</taxon>
        <taxon>Streptomyces</taxon>
    </lineage>
</organism>
<reference key="1">
    <citation type="journal article" date="1995" name="J. Bacteriol.">
        <title>Cloning and characterization of the Streptomyces peucetius dnrQS genes encoding a daunosamine biosynthesis enzyme and a glycosyl transferase involved in daunorubicin biosynthesis.</title>
        <authorList>
            <person name="Otten S.L."/>
            <person name="Liu X."/>
            <person name="Ferguson J."/>
            <person name="Hutchinson C.R."/>
        </authorList>
    </citation>
    <scope>NUCLEOTIDE SEQUENCE [GENOMIC DNA]</scope>
    <scope>FUNCTION</scope>
    <source>
        <strain>ATCC 29050 / DSM 40754 / JCM 9920 / NBRC 100596 / NCIMB 10972</strain>
    </source>
</reference>
<reference key="2">
    <citation type="journal article" date="1999" name="Chem. Biol.">
        <title>A two-plasmid system for the glycosylation of polyketide antibiotics: bioconversion of epsilon-rhodomycinone to rhodomycin D.</title>
        <authorList>
            <person name="Olano C."/>
            <person name="Lomovskaya N."/>
            <person name="Fonstein L."/>
            <person name="Roll J.T."/>
            <person name="Hutchinson C.R."/>
        </authorList>
    </citation>
    <scope>FUNCTION</scope>
    <source>
        <strain>ATCC 29050 / DSM 40754 / JCM 9920 / NBRC 100596 / NCIMB 10972</strain>
    </source>
</reference>
<name>DNRS_STRPE</name>
<feature type="signal peptide" evidence="1">
    <location>
        <begin position="1"/>
        <end position="23"/>
    </location>
</feature>
<feature type="chain" id="PRO_0000425678" description="TDP-daunosamine transferase DnrS">
    <location>
        <begin position="24"/>
        <end position="431"/>
    </location>
</feature>
<sequence length="431" mass="46555">MKVLVTAFAMDAHFNGVVPLAWALRAAGHDVRVASQPALTDSITRAGLTAVPVGTDHQVQAAMGAMAPGVFALHLNPDYLENRPELLDLEFLEASTSMLTAAFYAQINNDSMIDEMVDFAAWWRPDLVVWEPFTFGGAVAAQVTGAAQARLLWGPDLFLRVHDRFQQVLHEVPAERRDDALEEWLTWTLERHGAAFGPEVISGHWTIDQMPPSVRFATARPTVPMRFVPYNGPVPAVVPPWLRADPGRPRVLLTQGITERSTGFTGLPRAGELLASIAELDAEVVATVKAEEREGLPPLPGNVRVVDSLSLHVVLPSCAAVVHHGGAGTWATAALHGVPQLALAWQWDDVFRAGQLEKLGAGIFLPPHGEGASAGRVRDRLAQVLAEPSFRQGAARIRAEMLRTPAPGAVVPTLEQLTARHRAPAGQGVRH</sequence>
<evidence type="ECO:0000255" key="1"/>
<evidence type="ECO:0000269" key="2">
    <source>
    </source>
</evidence>
<evidence type="ECO:0000269" key="3">
    <source>
    </source>
</evidence>
<evidence type="ECO:0000305" key="4"/>
<protein>
    <recommendedName>
        <fullName>TDP-daunosamine transferase DnrS</fullName>
        <ecNumber>2.4.1.-</ecNumber>
    </recommendedName>
    <alternativeName>
        <fullName>2,3,6-trideoxy-3-aminohexose transferase</fullName>
    </alternativeName>
</protein>
<proteinExistence type="inferred from homology"/>
<accession>Q54824</accession>
<comment type="function">
    <text evidence="2 3">Involved in the biosynthesis of the anthracyclines carminomycin and daunorubicin (daunomycin) which are aromatic polyketide antibiotics that exhibit high cytotoxicity and are widely applied in the chemotherapy of a variety of cancers. Catalyzes the addition of the TDP activated glycoside, L-daunosamine-TDP (2,3,6-trideoxy-3-aminohexose-TDP) at position C-7 of epsilon-rhodomycinone to yield rhodomycin D. Glycosylation is a prerequisite for biological activity of anthracyclines and requires DnrQ which seems to act as an activator.</text>
</comment>
<comment type="catalytic activity">
    <reaction>
        <text>dTDP-beta-L-daunosamine + epsilon-rhodomycinone = rhodomycin D + dTDP + H(+)</text>
        <dbReference type="Rhea" id="RHEA:45760"/>
        <dbReference type="ChEBI" id="CHEBI:15378"/>
        <dbReference type="ChEBI" id="CHEBI:58369"/>
        <dbReference type="ChEBI" id="CHEBI:75291"/>
        <dbReference type="ChEBI" id="CHEBI:77073"/>
        <dbReference type="ChEBI" id="CHEBI:85417"/>
    </reaction>
</comment>
<comment type="pathway">
    <text>Antibiotic biosynthesis; daunorubicin biosynthesis.</text>
</comment>
<comment type="pathway">
    <text>Antibiotic biosynthesis; carminomycin biosynthesis.</text>
</comment>
<comment type="similarity">
    <text evidence="4">Belongs to the glycosyltransferase 28 family.</text>
</comment>
<keyword id="KW-0045">Antibiotic biosynthesis</keyword>
<keyword id="KW-0328">Glycosyltransferase</keyword>
<keyword id="KW-0732">Signal</keyword>
<keyword id="KW-0808">Transferase</keyword>